<feature type="chain" id="PRO_0000054713" description="3-alpha-(or 20-beta)-hydroxysteroid dehydrogenase">
    <location>
        <begin position="1"/>
        <end position="255"/>
    </location>
</feature>
<feature type="active site" description="Proton acceptor">
    <location>
        <position position="152"/>
    </location>
</feature>
<feature type="binding site">
    <location>
        <begin position="10"/>
        <end position="34"/>
    </location>
    <ligand>
        <name>NAD(+)</name>
        <dbReference type="ChEBI" id="CHEBI:57540"/>
    </ligand>
</feature>
<feature type="binding site" evidence="1">
    <location>
        <position position="139"/>
    </location>
    <ligand>
        <name>substrate</name>
    </ligand>
</feature>
<feature type="strand" evidence="3">
    <location>
        <begin position="7"/>
        <end position="12"/>
    </location>
</feature>
<feature type="turn" evidence="3">
    <location>
        <begin position="13"/>
        <end position="15"/>
    </location>
</feature>
<feature type="helix" evidence="3">
    <location>
        <begin position="17"/>
        <end position="28"/>
    </location>
</feature>
<feature type="strand" evidence="3">
    <location>
        <begin position="32"/>
        <end position="38"/>
    </location>
</feature>
<feature type="helix" evidence="3">
    <location>
        <begin position="40"/>
        <end position="48"/>
    </location>
</feature>
<feature type="helix" evidence="3">
    <location>
        <begin position="49"/>
        <end position="53"/>
    </location>
</feature>
<feature type="strand" evidence="3">
    <location>
        <begin position="54"/>
        <end position="58"/>
    </location>
</feature>
<feature type="helix" evidence="3">
    <location>
        <begin position="64"/>
        <end position="78"/>
    </location>
</feature>
<feature type="strand" evidence="3">
    <location>
        <begin position="83"/>
        <end position="86"/>
    </location>
</feature>
<feature type="helix" evidence="3">
    <location>
        <begin position="96"/>
        <end position="98"/>
    </location>
</feature>
<feature type="helix" evidence="3">
    <location>
        <begin position="101"/>
        <end position="111"/>
    </location>
</feature>
<feature type="helix" evidence="3">
    <location>
        <begin position="113"/>
        <end position="129"/>
    </location>
</feature>
<feature type="strand" evidence="3">
    <location>
        <begin position="132"/>
        <end position="137"/>
    </location>
</feature>
<feature type="helix" evidence="3">
    <location>
        <begin position="140"/>
        <end position="142"/>
    </location>
</feature>
<feature type="helix" evidence="3">
    <location>
        <begin position="150"/>
        <end position="170"/>
    </location>
</feature>
<feature type="helix" evidence="3">
    <location>
        <begin position="171"/>
        <end position="173"/>
    </location>
</feature>
<feature type="strand" evidence="3">
    <location>
        <begin position="175"/>
        <end position="182"/>
    </location>
</feature>
<feature type="helix" evidence="3">
    <location>
        <begin position="188"/>
        <end position="193"/>
    </location>
</feature>
<feature type="helix" evidence="3">
    <location>
        <begin position="214"/>
        <end position="225"/>
    </location>
</feature>
<feature type="helix" evidence="3">
    <location>
        <begin position="227"/>
        <end position="229"/>
    </location>
</feature>
<feature type="strand" evidence="3">
    <location>
        <begin position="236"/>
        <end position="240"/>
    </location>
</feature>
<feature type="turn" evidence="3">
    <location>
        <begin position="241"/>
        <end position="245"/>
    </location>
</feature>
<feature type="helix" evidence="3">
    <location>
        <begin position="249"/>
        <end position="253"/>
    </location>
</feature>
<reference key="1">
    <citation type="journal article" date="1990" name="FEBS Lett.">
        <title>Prokaryotic 20 beta-hydroxysteroid dehydrogenase is an enzyme of the 'short-chain, non-metalloenzyme' alcohol dehydrogenase type.</title>
        <authorList>
            <person name="Marekov L."/>
            <person name="Krook M."/>
            <person name="Joernvall H."/>
        </authorList>
    </citation>
    <scope>PROTEIN SEQUENCE</scope>
</reference>
<reference key="2">
    <citation type="journal article" date="1991" name="Proc. Natl. Acad. Sci. U.S.A.">
        <title>Three-dimensional structure of holo 3 alpha,20 beta-hydroxysteroid dehydrogenase: a member of a short-chain dehydrogenase family.</title>
        <authorList>
            <person name="Ghosh D."/>
            <person name="Weeks C.M."/>
            <person name="Grochulski P."/>
            <person name="Duax W.L."/>
            <person name="Erman M."/>
            <person name="Rimsay R.L."/>
            <person name="Orr J.C."/>
        </authorList>
    </citation>
    <scope>X-RAY CRYSTALLOGRAPHY (2.6 ANGSTROMS)</scope>
</reference>
<accession>P19992</accession>
<proteinExistence type="evidence at protein level"/>
<keyword id="KW-0002">3D-structure</keyword>
<keyword id="KW-0903">Direct protein sequencing</keyword>
<keyword id="KW-0443">Lipid metabolism</keyword>
<keyword id="KW-0520">NAD</keyword>
<keyword id="KW-0560">Oxidoreductase</keyword>
<keyword id="KW-0753">Steroid metabolism</keyword>
<protein>
    <recommendedName>
        <fullName>3-alpha-(or 20-beta)-hydroxysteroid dehydrogenase</fullName>
        <ecNumber>1.1.1.53</ecNumber>
    </recommendedName>
</protein>
<evidence type="ECO:0000250" key="1"/>
<evidence type="ECO:0000305" key="2"/>
<evidence type="ECO:0007829" key="3">
    <source>
        <dbReference type="PDB" id="1HDC"/>
    </source>
</evidence>
<sequence>MNDLSGKTVIITGGARGLGAEAARQAVAAGARVVLADVLDEEGAATARELGDAARYQHLDVTIEEDWQRVVAYAREEFGSVDGLVNNAGISTGMFLETESVERFRKVVDINLTGVFIGMKTVIPAMKDAGGGSIVNISSAAGLMGLALTSSYGASKWGVRGLSKLAAVELGTDRIRVNSVHPGMTYTPMTAETGIRQGEGNYPNTPMGRVGNEPGEIAGAVVKLLSDTSSYVTGAELAVDGGWTTGPTVKYVMGQ</sequence>
<dbReference type="EC" id="1.1.1.53"/>
<dbReference type="PIR" id="S10707">
    <property type="entry name" value="S10707"/>
</dbReference>
<dbReference type="PDB" id="1HDC">
    <property type="method" value="X-ray"/>
    <property type="resolution" value="2.20 A"/>
    <property type="chains" value="A/B/C/D=2-255"/>
</dbReference>
<dbReference type="PDB" id="2HSD">
    <property type="method" value="X-ray"/>
    <property type="resolution" value="2.64 A"/>
    <property type="chains" value="A/B/C/D=2-255"/>
</dbReference>
<dbReference type="PDBsum" id="1HDC"/>
<dbReference type="PDBsum" id="2HSD"/>
<dbReference type="SMR" id="P19992"/>
<dbReference type="ChEMBL" id="CHEMBL3243917"/>
<dbReference type="DrugBank" id="DB02329">
    <property type="generic name" value="Carbenoxolone"/>
</dbReference>
<dbReference type="UniPathway" id="UPA00229"/>
<dbReference type="EvolutionaryTrace" id="P19992"/>
<dbReference type="GO" id="GO:0047044">
    <property type="term" value="F:androstan-3-alpha,17-beta-diol dehydrogenase (NAD+) activity"/>
    <property type="evidence" value="ECO:0007669"/>
    <property type="project" value="UniProtKB-EC"/>
</dbReference>
<dbReference type="GO" id="GO:0008207">
    <property type="term" value="P:C21-steroid hormone metabolic process"/>
    <property type="evidence" value="ECO:0007669"/>
    <property type="project" value="UniProtKB-UniPathway"/>
</dbReference>
<dbReference type="CDD" id="cd05341">
    <property type="entry name" value="3beta-17beta-HSD_like_SDR_c"/>
    <property type="match status" value="1"/>
</dbReference>
<dbReference type="FunFam" id="3.40.50.720:FF:000084">
    <property type="entry name" value="Short-chain dehydrogenase reductase"/>
    <property type="match status" value="1"/>
</dbReference>
<dbReference type="Gene3D" id="3.40.50.720">
    <property type="entry name" value="NAD(P)-binding Rossmann-like Domain"/>
    <property type="match status" value="1"/>
</dbReference>
<dbReference type="InterPro" id="IPR036291">
    <property type="entry name" value="NAD(P)-bd_dom_sf"/>
</dbReference>
<dbReference type="InterPro" id="IPR020904">
    <property type="entry name" value="Sc_DH/Rdtase_CS"/>
</dbReference>
<dbReference type="InterPro" id="IPR002347">
    <property type="entry name" value="SDR_fam"/>
</dbReference>
<dbReference type="NCBIfam" id="NF005559">
    <property type="entry name" value="PRK07231.1"/>
    <property type="match status" value="1"/>
</dbReference>
<dbReference type="PANTHER" id="PTHR42760:SF133">
    <property type="entry name" value="3-OXOACYL-[ACYL-CARRIER-PROTEIN] REDUCTASE"/>
    <property type="match status" value="1"/>
</dbReference>
<dbReference type="PANTHER" id="PTHR42760">
    <property type="entry name" value="SHORT-CHAIN DEHYDROGENASES/REDUCTASES FAMILY MEMBER"/>
    <property type="match status" value="1"/>
</dbReference>
<dbReference type="Pfam" id="PF13561">
    <property type="entry name" value="adh_short_C2"/>
    <property type="match status" value="1"/>
</dbReference>
<dbReference type="PRINTS" id="PR00081">
    <property type="entry name" value="GDHRDH"/>
</dbReference>
<dbReference type="PRINTS" id="PR00080">
    <property type="entry name" value="SDRFAMILY"/>
</dbReference>
<dbReference type="SMART" id="SM00822">
    <property type="entry name" value="PKS_KR"/>
    <property type="match status" value="1"/>
</dbReference>
<dbReference type="SUPFAM" id="SSF51735">
    <property type="entry name" value="NAD(P)-binding Rossmann-fold domains"/>
    <property type="match status" value="1"/>
</dbReference>
<dbReference type="PROSITE" id="PS00061">
    <property type="entry name" value="ADH_SHORT"/>
    <property type="match status" value="1"/>
</dbReference>
<name>HSD_STREX</name>
<organism>
    <name type="scientific">Streptomyces exfoliatus</name>
    <name type="common">Streptomyces hydrogenans</name>
    <dbReference type="NCBI Taxonomy" id="1905"/>
    <lineage>
        <taxon>Bacteria</taxon>
        <taxon>Bacillati</taxon>
        <taxon>Actinomycetota</taxon>
        <taxon>Actinomycetes</taxon>
        <taxon>Kitasatosporales</taxon>
        <taxon>Streptomycetaceae</taxon>
        <taxon>Streptomyces</taxon>
    </lineage>
</organism>
<comment type="catalytic activity">
    <reaction>
        <text>androstan-3alpha,17beta-diol + NAD(+) = 17beta-hydroxyandrostanone + NADH + H(+)</text>
        <dbReference type="Rhea" id="RHEA:22400"/>
        <dbReference type="ChEBI" id="CHEBI:15378"/>
        <dbReference type="ChEBI" id="CHEBI:18011"/>
        <dbReference type="ChEBI" id="CHEBI:57540"/>
        <dbReference type="ChEBI" id="CHEBI:57945"/>
        <dbReference type="ChEBI" id="CHEBI:85278"/>
        <dbReference type="EC" id="1.1.1.53"/>
    </reaction>
</comment>
<comment type="pathway">
    <text>Lipid metabolism; C21-steroid hormone metabolism.</text>
</comment>
<comment type="subunit">
    <text>Homotetramer.</text>
</comment>
<comment type="similarity">
    <text evidence="2">Belongs to the short-chain dehydrogenases/reductases (SDR) family.</text>
</comment>